<reference key="1">
    <citation type="submission" date="2009-05" db="EMBL/GenBank/DDBJ databases">
        <title>Complete sequence of Tolumonas auensis DSM 9187.</title>
        <authorList>
            <consortium name="US DOE Joint Genome Institute"/>
            <person name="Lucas S."/>
            <person name="Copeland A."/>
            <person name="Lapidus A."/>
            <person name="Glavina del Rio T."/>
            <person name="Tice H."/>
            <person name="Bruce D."/>
            <person name="Goodwin L."/>
            <person name="Pitluck S."/>
            <person name="Chertkov O."/>
            <person name="Brettin T."/>
            <person name="Detter J.C."/>
            <person name="Han C."/>
            <person name="Larimer F."/>
            <person name="Land M."/>
            <person name="Hauser L."/>
            <person name="Kyrpides N."/>
            <person name="Mikhailova N."/>
            <person name="Spring S."/>
            <person name="Beller H."/>
        </authorList>
    </citation>
    <scope>NUCLEOTIDE SEQUENCE [LARGE SCALE GENOMIC DNA]</scope>
    <source>
        <strain>DSM 9187 / NBRC 110442 / TA 4</strain>
    </source>
</reference>
<name>RS18_TOLAT</name>
<dbReference type="EMBL" id="CP001616">
    <property type="protein sequence ID" value="ACQ94092.1"/>
    <property type="molecule type" value="Genomic_DNA"/>
</dbReference>
<dbReference type="RefSeq" id="WP_015879541.1">
    <property type="nucleotide sequence ID" value="NC_012691.1"/>
</dbReference>
<dbReference type="SMR" id="C4LAB7"/>
<dbReference type="STRING" id="595494.Tola_2498"/>
<dbReference type="KEGG" id="tau:Tola_2498"/>
<dbReference type="eggNOG" id="COG0238">
    <property type="taxonomic scope" value="Bacteria"/>
</dbReference>
<dbReference type="HOGENOM" id="CLU_148710_2_2_6"/>
<dbReference type="OrthoDB" id="9812008at2"/>
<dbReference type="Proteomes" id="UP000009073">
    <property type="component" value="Chromosome"/>
</dbReference>
<dbReference type="GO" id="GO:0022627">
    <property type="term" value="C:cytosolic small ribosomal subunit"/>
    <property type="evidence" value="ECO:0007669"/>
    <property type="project" value="TreeGrafter"/>
</dbReference>
<dbReference type="GO" id="GO:0070181">
    <property type="term" value="F:small ribosomal subunit rRNA binding"/>
    <property type="evidence" value="ECO:0007669"/>
    <property type="project" value="TreeGrafter"/>
</dbReference>
<dbReference type="GO" id="GO:0003735">
    <property type="term" value="F:structural constituent of ribosome"/>
    <property type="evidence" value="ECO:0007669"/>
    <property type="project" value="InterPro"/>
</dbReference>
<dbReference type="GO" id="GO:0006412">
    <property type="term" value="P:translation"/>
    <property type="evidence" value="ECO:0007669"/>
    <property type="project" value="UniProtKB-UniRule"/>
</dbReference>
<dbReference type="FunFam" id="4.10.640.10:FF:000001">
    <property type="entry name" value="30S ribosomal protein S18"/>
    <property type="match status" value="1"/>
</dbReference>
<dbReference type="Gene3D" id="4.10.640.10">
    <property type="entry name" value="Ribosomal protein S18"/>
    <property type="match status" value="1"/>
</dbReference>
<dbReference type="HAMAP" id="MF_00270">
    <property type="entry name" value="Ribosomal_bS18"/>
    <property type="match status" value="1"/>
</dbReference>
<dbReference type="InterPro" id="IPR001648">
    <property type="entry name" value="Ribosomal_bS18"/>
</dbReference>
<dbReference type="InterPro" id="IPR018275">
    <property type="entry name" value="Ribosomal_bS18_CS"/>
</dbReference>
<dbReference type="InterPro" id="IPR036870">
    <property type="entry name" value="Ribosomal_bS18_sf"/>
</dbReference>
<dbReference type="NCBIfam" id="TIGR00165">
    <property type="entry name" value="S18"/>
    <property type="match status" value="1"/>
</dbReference>
<dbReference type="PANTHER" id="PTHR13479">
    <property type="entry name" value="30S RIBOSOMAL PROTEIN S18"/>
    <property type="match status" value="1"/>
</dbReference>
<dbReference type="PANTHER" id="PTHR13479:SF40">
    <property type="entry name" value="SMALL RIBOSOMAL SUBUNIT PROTEIN BS18M"/>
    <property type="match status" value="1"/>
</dbReference>
<dbReference type="Pfam" id="PF01084">
    <property type="entry name" value="Ribosomal_S18"/>
    <property type="match status" value="1"/>
</dbReference>
<dbReference type="PRINTS" id="PR00974">
    <property type="entry name" value="RIBOSOMALS18"/>
</dbReference>
<dbReference type="SUPFAM" id="SSF46911">
    <property type="entry name" value="Ribosomal protein S18"/>
    <property type="match status" value="1"/>
</dbReference>
<dbReference type="PROSITE" id="PS00057">
    <property type="entry name" value="RIBOSOMAL_S18"/>
    <property type="match status" value="1"/>
</dbReference>
<sequence length="76" mass="9130">MSRFFRRRKFCRFTAERVTEIDYKDTVTLKNYITESGKIVPSRITGTRAKYQRQLARAIKRARYLALLPYTDLHNK</sequence>
<proteinExistence type="inferred from homology"/>
<protein>
    <recommendedName>
        <fullName evidence="1">Small ribosomal subunit protein bS18</fullName>
    </recommendedName>
    <alternativeName>
        <fullName evidence="2">30S ribosomal protein S18</fullName>
    </alternativeName>
</protein>
<accession>C4LAB7</accession>
<keyword id="KW-1185">Reference proteome</keyword>
<keyword id="KW-0687">Ribonucleoprotein</keyword>
<keyword id="KW-0689">Ribosomal protein</keyword>
<keyword id="KW-0694">RNA-binding</keyword>
<keyword id="KW-0699">rRNA-binding</keyword>
<comment type="function">
    <text evidence="1">Binds as a heterodimer with protein bS6 to the central domain of the 16S rRNA, where it helps stabilize the platform of the 30S subunit.</text>
</comment>
<comment type="subunit">
    <text evidence="1">Part of the 30S ribosomal subunit. Forms a tight heterodimer with protein bS6.</text>
</comment>
<comment type="similarity">
    <text evidence="1">Belongs to the bacterial ribosomal protein bS18 family.</text>
</comment>
<organism>
    <name type="scientific">Tolumonas auensis (strain DSM 9187 / NBRC 110442 / TA 4)</name>
    <dbReference type="NCBI Taxonomy" id="595494"/>
    <lineage>
        <taxon>Bacteria</taxon>
        <taxon>Pseudomonadati</taxon>
        <taxon>Pseudomonadota</taxon>
        <taxon>Gammaproteobacteria</taxon>
        <taxon>Aeromonadales</taxon>
        <taxon>Aeromonadaceae</taxon>
        <taxon>Tolumonas</taxon>
    </lineage>
</organism>
<gene>
    <name evidence="1" type="primary">rpsR</name>
    <name type="ordered locus">Tola_2498</name>
</gene>
<evidence type="ECO:0000255" key="1">
    <source>
        <dbReference type="HAMAP-Rule" id="MF_00270"/>
    </source>
</evidence>
<evidence type="ECO:0000305" key="2"/>
<feature type="chain" id="PRO_1000204739" description="Small ribosomal subunit protein bS18">
    <location>
        <begin position="1"/>
        <end position="76"/>
    </location>
</feature>